<accession>P69970</accession>
<accession>Q00933</accession>
<accession>Q663I1</accession>
<sequence length="115" mass="12669">MPNIEIAQADEVIITTLEELGPAEPTTDQIMRFDAAMSEDTQGLGHSLLKEVSDIQKSFKTVKSDLHTKLAVSVDNPNDLMLMQWSLIRITIQEELIAKTAGRMSQNVETLSKGG</sequence>
<organism>
    <name type="scientific">Yersinia pestis</name>
    <dbReference type="NCBI Taxonomy" id="632"/>
    <lineage>
        <taxon>Bacteria</taxon>
        <taxon>Pseudomonadati</taxon>
        <taxon>Pseudomonadota</taxon>
        <taxon>Gammaproteobacteria</taxon>
        <taxon>Enterobacterales</taxon>
        <taxon>Yersiniaceae</taxon>
        <taxon>Yersinia</taxon>
    </lineage>
</organism>
<reference key="1">
    <citation type="journal article" date="1998" name="Infect. Immun.">
        <title>DNA sequencing and analysis of the low-Ca2+-response plasmid pCD1 of Yersinia pestis KIM5.</title>
        <authorList>
            <person name="Perry R.D."/>
            <person name="Straley S.C."/>
            <person name="Fetherston J.D."/>
            <person name="Rose D.J."/>
            <person name="Gregor J."/>
            <person name="Blattner F.R."/>
        </authorList>
    </citation>
    <scope>NUCLEOTIDE SEQUENCE [GENOMIC DNA]</scope>
    <source>
        <strain>KIM5 / Biovar Mediaevalis</strain>
    </source>
</reference>
<reference key="2">
    <citation type="journal article" date="1998" name="J. Bacteriol.">
        <title>Structural organization of virulence-associated plasmids of Yersinia pestis.</title>
        <authorList>
            <person name="Hu P."/>
            <person name="Elliott J."/>
            <person name="McCready P."/>
            <person name="Skowronski E."/>
            <person name="Garnes J."/>
            <person name="Kobayashi A."/>
            <person name="Brubaker R.R."/>
            <person name="Garcia E."/>
        </authorList>
    </citation>
    <scope>NUCLEOTIDE SEQUENCE [GENOMIC DNA]</scope>
    <source>
        <strain>KIM5 / Biovar Mediaevalis</strain>
    </source>
</reference>
<reference key="3">
    <citation type="journal article" date="2001" name="Nature">
        <title>Genome sequence of Yersinia pestis, the causative agent of plague.</title>
        <authorList>
            <person name="Parkhill J."/>
            <person name="Wren B.W."/>
            <person name="Thomson N.R."/>
            <person name="Titball R.W."/>
            <person name="Holden M.T.G."/>
            <person name="Prentice M.B."/>
            <person name="Sebaihia M."/>
            <person name="James K.D."/>
            <person name="Churcher C.M."/>
            <person name="Mungall K.L."/>
            <person name="Baker S."/>
            <person name="Basham D."/>
            <person name="Bentley S.D."/>
            <person name="Brooks K."/>
            <person name="Cerdeno-Tarraga A.-M."/>
            <person name="Chillingworth T."/>
            <person name="Cronin A."/>
            <person name="Davies R.M."/>
            <person name="Davis P."/>
            <person name="Dougan G."/>
            <person name="Feltwell T."/>
            <person name="Hamlin N."/>
            <person name="Holroyd S."/>
            <person name="Jagels K."/>
            <person name="Karlyshev A.V."/>
            <person name="Leather S."/>
            <person name="Moule S."/>
            <person name="Oyston P.C.F."/>
            <person name="Quail M.A."/>
            <person name="Rutherford K.M."/>
            <person name="Simmonds M."/>
            <person name="Skelton J."/>
            <person name="Stevens K."/>
            <person name="Whitehead S."/>
            <person name="Barrell B.G."/>
        </authorList>
    </citation>
    <scope>NUCLEOTIDE SEQUENCE [LARGE SCALE GENOMIC DNA]</scope>
    <source>
        <strain>CO-92 / Biovar Orientalis</strain>
    </source>
</reference>
<reference key="4">
    <citation type="journal article" date="2004" name="DNA Res.">
        <title>Complete genome sequence of Yersinia pestis strain 91001, an isolate avirulent to humans.</title>
        <authorList>
            <person name="Song Y."/>
            <person name="Tong Z."/>
            <person name="Wang J."/>
            <person name="Wang L."/>
            <person name="Guo Z."/>
            <person name="Han Y."/>
            <person name="Zhang J."/>
            <person name="Pei D."/>
            <person name="Zhou D."/>
            <person name="Qin H."/>
            <person name="Pang X."/>
            <person name="Han Y."/>
            <person name="Zhai J."/>
            <person name="Li M."/>
            <person name="Cui B."/>
            <person name="Qi Z."/>
            <person name="Jin L."/>
            <person name="Dai R."/>
            <person name="Chen F."/>
            <person name="Li S."/>
            <person name="Ye C."/>
            <person name="Du Z."/>
            <person name="Lin W."/>
            <person name="Wang J."/>
            <person name="Yu J."/>
            <person name="Yang H."/>
            <person name="Wang J."/>
            <person name="Huang P."/>
            <person name="Yang R."/>
        </authorList>
    </citation>
    <scope>NUCLEOTIDE SEQUENCE [LARGE SCALE GENOMIC DNA]</scope>
    <source>
        <strain>91001 / Biovar Mediaevalis</strain>
    </source>
</reference>
<proteinExistence type="inferred from homology"/>
<evidence type="ECO:0000250" key="1"/>
<evidence type="ECO:0000305" key="2"/>
<feature type="chain" id="PRO_0000066487" description="Yop proteins translocation protein I">
    <location>
        <begin position="1"/>
        <end position="115"/>
    </location>
</feature>
<geneLocation type="plasmid">
    <name>pCD1</name>
</geneLocation>
<comment type="function">
    <text evidence="1">Belongs to an operon involved in the translocation of Yop proteins across the bacterial membranes or in the specific control of this function.</text>
</comment>
<comment type="similarity">
    <text evidence="2">Belongs to the YscI/HrpB family.</text>
</comment>
<gene>
    <name type="primary">yscI</name>
    <name type="synonym">lcrO</name>
    <name type="ordered locus">YPCD1.58</name>
    <name type="ordered locus">y5020</name>
    <name type="ordered locus">y0023</name>
    <name type="ordered locus">YP_pCD25</name>
</gene>
<name>YSCI_YERPE</name>
<dbReference type="EMBL" id="AF074612">
    <property type="protein sequence ID" value="AAC69776.1"/>
    <property type="molecule type" value="Genomic_DNA"/>
</dbReference>
<dbReference type="EMBL" id="AF053946">
    <property type="protein sequence ID" value="AAC62608.1"/>
    <property type="molecule type" value="Genomic_DNA"/>
</dbReference>
<dbReference type="EMBL" id="AL117189">
    <property type="protein sequence ID" value="CAB54935.1"/>
    <property type="molecule type" value="Genomic_DNA"/>
</dbReference>
<dbReference type="EMBL" id="AE017043">
    <property type="protein sequence ID" value="AAS58544.1"/>
    <property type="molecule type" value="Genomic_DNA"/>
</dbReference>
<dbReference type="PIR" id="T43567">
    <property type="entry name" value="T43567"/>
</dbReference>
<dbReference type="RefSeq" id="NP_395192.1">
    <property type="nucleotide sequence ID" value="NC_003131.1"/>
</dbReference>
<dbReference type="RefSeq" id="NP_857724.1">
    <property type="nucleotide sequence ID" value="NC_004836.1"/>
</dbReference>
<dbReference type="RefSeq" id="NP_857919.1">
    <property type="nucleotide sequence ID" value="NC_004839.1"/>
</dbReference>
<dbReference type="RefSeq" id="WP_002212914.1">
    <property type="nucleotide sequence ID" value="NZ_WUCM01000070.1"/>
</dbReference>
<dbReference type="SMR" id="P69970"/>
<dbReference type="IntAct" id="P69970">
    <property type="interactions" value="2"/>
</dbReference>
<dbReference type="MINT" id="P69970"/>
<dbReference type="PaxDb" id="214092-5832478"/>
<dbReference type="EnsemblBacteria" id="AAS58544">
    <property type="protein sequence ID" value="AAS58544"/>
    <property type="gene ID" value="YP_pCD25"/>
</dbReference>
<dbReference type="KEGG" id="ype:YPCD1.58"/>
<dbReference type="KEGG" id="ypm:YP_pCD25"/>
<dbReference type="PATRIC" id="fig|214092.21.peg.68"/>
<dbReference type="eggNOG" id="ENOG50336BE">
    <property type="taxonomic scope" value="Bacteria"/>
</dbReference>
<dbReference type="HOGENOM" id="CLU_171571_0_0_6"/>
<dbReference type="OMA" id="NTQYTEV"/>
<dbReference type="OrthoDB" id="6996420at2"/>
<dbReference type="Proteomes" id="UP000000815">
    <property type="component" value="Plasmid pCD1"/>
</dbReference>
<dbReference type="Proteomes" id="UP000001019">
    <property type="component" value="Plasmid pCD1"/>
</dbReference>
<dbReference type="GO" id="GO:0030254">
    <property type="term" value="P:protein secretion by the type III secretion system"/>
    <property type="evidence" value="ECO:0007669"/>
    <property type="project" value="InterPro"/>
</dbReference>
<dbReference type="InterPro" id="IPR012670">
    <property type="entry name" value="T3SS_YscI/HrpB"/>
</dbReference>
<dbReference type="NCBIfam" id="TIGR02497">
    <property type="entry name" value="yscI_hrpB_dom"/>
    <property type="match status" value="1"/>
</dbReference>
<dbReference type="Pfam" id="PF17001">
    <property type="entry name" value="T3SS_basalb_I"/>
    <property type="match status" value="1"/>
</dbReference>
<protein>
    <recommendedName>
        <fullName>Yop proteins translocation protein I</fullName>
    </recommendedName>
    <alternativeName>
        <fullName>Low calcium response locus protein O</fullName>
    </alternativeName>
</protein>
<keyword id="KW-0614">Plasmid</keyword>
<keyword id="KW-1185">Reference proteome</keyword>
<keyword id="KW-0843">Virulence</keyword>